<feature type="chain" id="PRO_1000189046" description="Cytochrome c-type biogenesis protein CcmE">
    <location>
        <begin position="1"/>
        <end position="150"/>
    </location>
</feature>
<feature type="topological domain" description="Cytoplasmic" evidence="1">
    <location>
        <begin position="1"/>
        <end position="7"/>
    </location>
</feature>
<feature type="transmembrane region" description="Helical; Signal-anchor for type II membrane protein" evidence="1">
    <location>
        <begin position="8"/>
        <end position="28"/>
    </location>
</feature>
<feature type="topological domain" description="Periplasmic" evidence="1">
    <location>
        <begin position="29"/>
        <end position="150"/>
    </location>
</feature>
<feature type="binding site" description="covalent" evidence="1">
    <location>
        <position position="123"/>
    </location>
    <ligand>
        <name>heme</name>
        <dbReference type="ChEBI" id="CHEBI:30413"/>
    </ligand>
</feature>
<feature type="binding site" description="axial binding residue" evidence="1">
    <location>
        <position position="127"/>
    </location>
    <ligand>
        <name>heme</name>
        <dbReference type="ChEBI" id="CHEBI:30413"/>
    </ligand>
    <ligandPart>
        <name>Fe</name>
        <dbReference type="ChEBI" id="CHEBI:18248"/>
    </ligandPart>
</feature>
<accession>C3M8M7</accession>
<gene>
    <name evidence="1" type="primary">ccmE</name>
    <name evidence="1" type="synonym">cycJ</name>
    <name type="ordered locus">NGR_c07800</name>
</gene>
<sequence>MTRKQKRLAIIGGGVGFLTAAVLLVMFAFSQAVAYFYVPGDLAKADLAPGTRIRLGGLVEAGSVKRGDGKTVTFSVTDTLAVVPVTYTGILPDLFREGQGVVAEGAFVAGSSVFVADTVLAKHDETYMPKDVADRLKAQGVTLGGKENIQ</sequence>
<organism>
    <name type="scientific">Sinorhizobium fredii (strain NBRC 101917 / NGR234)</name>
    <dbReference type="NCBI Taxonomy" id="394"/>
    <lineage>
        <taxon>Bacteria</taxon>
        <taxon>Pseudomonadati</taxon>
        <taxon>Pseudomonadota</taxon>
        <taxon>Alphaproteobacteria</taxon>
        <taxon>Hyphomicrobiales</taxon>
        <taxon>Rhizobiaceae</taxon>
        <taxon>Sinorhizobium/Ensifer group</taxon>
        <taxon>Sinorhizobium</taxon>
    </lineage>
</organism>
<dbReference type="EMBL" id="CP001389">
    <property type="protein sequence ID" value="ACP24573.1"/>
    <property type="molecule type" value="Genomic_DNA"/>
</dbReference>
<dbReference type="RefSeq" id="WP_012707358.1">
    <property type="nucleotide sequence ID" value="NC_012587.1"/>
</dbReference>
<dbReference type="RefSeq" id="YP_002825326.1">
    <property type="nucleotide sequence ID" value="NC_012587.1"/>
</dbReference>
<dbReference type="SMR" id="C3M8M7"/>
<dbReference type="STRING" id="394.NGR_c07800"/>
<dbReference type="KEGG" id="rhi:NGR_c07800"/>
<dbReference type="PATRIC" id="fig|394.7.peg.3594"/>
<dbReference type="eggNOG" id="COG2332">
    <property type="taxonomic scope" value="Bacteria"/>
</dbReference>
<dbReference type="HOGENOM" id="CLU_079503_1_1_5"/>
<dbReference type="OrthoDB" id="9793584at2"/>
<dbReference type="Proteomes" id="UP000001054">
    <property type="component" value="Chromosome"/>
</dbReference>
<dbReference type="GO" id="GO:0005886">
    <property type="term" value="C:plasma membrane"/>
    <property type="evidence" value="ECO:0007669"/>
    <property type="project" value="UniProtKB-SubCell"/>
</dbReference>
<dbReference type="GO" id="GO:0020037">
    <property type="term" value="F:heme binding"/>
    <property type="evidence" value="ECO:0007669"/>
    <property type="project" value="InterPro"/>
</dbReference>
<dbReference type="GO" id="GO:0046872">
    <property type="term" value="F:metal ion binding"/>
    <property type="evidence" value="ECO:0007669"/>
    <property type="project" value="UniProtKB-KW"/>
</dbReference>
<dbReference type="GO" id="GO:0017004">
    <property type="term" value="P:cytochrome complex assembly"/>
    <property type="evidence" value="ECO:0007669"/>
    <property type="project" value="UniProtKB-KW"/>
</dbReference>
<dbReference type="Gene3D" id="2.40.50.140">
    <property type="entry name" value="Nucleic acid-binding proteins"/>
    <property type="match status" value="1"/>
</dbReference>
<dbReference type="HAMAP" id="MF_01959">
    <property type="entry name" value="CcmE"/>
    <property type="match status" value="1"/>
</dbReference>
<dbReference type="InterPro" id="IPR004329">
    <property type="entry name" value="CcmE"/>
</dbReference>
<dbReference type="InterPro" id="IPR036127">
    <property type="entry name" value="CcmE-like_sf"/>
</dbReference>
<dbReference type="InterPro" id="IPR012340">
    <property type="entry name" value="NA-bd_OB-fold"/>
</dbReference>
<dbReference type="NCBIfam" id="NF009727">
    <property type="entry name" value="PRK13254.1-1"/>
    <property type="match status" value="1"/>
</dbReference>
<dbReference type="NCBIfam" id="NF009731">
    <property type="entry name" value="PRK13254.1-5"/>
    <property type="match status" value="1"/>
</dbReference>
<dbReference type="PANTHER" id="PTHR34128">
    <property type="entry name" value="CYTOCHROME C-TYPE BIOGENESIS PROTEIN CCME HOMOLOG, MITOCHONDRIAL"/>
    <property type="match status" value="1"/>
</dbReference>
<dbReference type="PANTHER" id="PTHR34128:SF2">
    <property type="entry name" value="CYTOCHROME C-TYPE BIOGENESIS PROTEIN CCME HOMOLOG, MITOCHONDRIAL"/>
    <property type="match status" value="1"/>
</dbReference>
<dbReference type="Pfam" id="PF03100">
    <property type="entry name" value="CcmE"/>
    <property type="match status" value="1"/>
</dbReference>
<dbReference type="SUPFAM" id="SSF82093">
    <property type="entry name" value="Heme chaperone CcmE"/>
    <property type="match status" value="1"/>
</dbReference>
<comment type="function">
    <text evidence="1">Heme chaperone required for the biogenesis of c-type cytochromes. Transiently binds heme delivered by CcmC and transfers the heme to apo-cytochromes in a process facilitated by CcmF and CcmH.</text>
</comment>
<comment type="subcellular location">
    <subcellularLocation>
        <location evidence="1">Cell inner membrane</location>
        <topology evidence="1">Single-pass type II membrane protein</topology>
        <orientation evidence="1">Periplasmic side</orientation>
    </subcellularLocation>
</comment>
<comment type="similarity">
    <text evidence="1">Belongs to the CcmE/CycJ family.</text>
</comment>
<name>CCME_SINFN</name>
<proteinExistence type="inferred from homology"/>
<reference key="1">
    <citation type="journal article" date="2009" name="Appl. Environ. Microbiol.">
        <title>Rhizobium sp. strain NGR234 possesses a remarkable number of secretion systems.</title>
        <authorList>
            <person name="Schmeisser C."/>
            <person name="Liesegang H."/>
            <person name="Krysciak D."/>
            <person name="Bakkou N."/>
            <person name="Le Quere A."/>
            <person name="Wollherr A."/>
            <person name="Heinemeyer I."/>
            <person name="Morgenstern B."/>
            <person name="Pommerening-Roeser A."/>
            <person name="Flores M."/>
            <person name="Palacios R."/>
            <person name="Brenner S."/>
            <person name="Gottschalk G."/>
            <person name="Schmitz R.A."/>
            <person name="Broughton W.J."/>
            <person name="Perret X."/>
            <person name="Strittmatter A.W."/>
            <person name="Streit W.R."/>
        </authorList>
    </citation>
    <scope>NUCLEOTIDE SEQUENCE [LARGE SCALE GENOMIC DNA]</scope>
    <source>
        <strain>NBRC 101917 / NGR234</strain>
    </source>
</reference>
<evidence type="ECO:0000255" key="1">
    <source>
        <dbReference type="HAMAP-Rule" id="MF_01959"/>
    </source>
</evidence>
<keyword id="KW-0997">Cell inner membrane</keyword>
<keyword id="KW-1003">Cell membrane</keyword>
<keyword id="KW-0201">Cytochrome c-type biogenesis</keyword>
<keyword id="KW-0349">Heme</keyword>
<keyword id="KW-0408">Iron</keyword>
<keyword id="KW-0472">Membrane</keyword>
<keyword id="KW-0479">Metal-binding</keyword>
<keyword id="KW-1185">Reference proteome</keyword>
<keyword id="KW-0735">Signal-anchor</keyword>
<keyword id="KW-0812">Transmembrane</keyword>
<keyword id="KW-1133">Transmembrane helix</keyword>
<protein>
    <recommendedName>
        <fullName evidence="1">Cytochrome c-type biogenesis protein CcmE</fullName>
    </recommendedName>
    <alternativeName>
        <fullName evidence="1">Cytochrome c maturation protein E</fullName>
    </alternativeName>
    <alternativeName>
        <fullName evidence="1">Heme chaperone CcmE</fullName>
    </alternativeName>
</protein>